<dbReference type="EMBL" id="X56010">
    <property type="protein sequence ID" value="CAA39485.1"/>
    <property type="molecule type" value="Genomic_DNA"/>
</dbReference>
<dbReference type="PIR" id="S13383">
    <property type="entry name" value="S13383"/>
</dbReference>
<dbReference type="GO" id="GO:0005576">
    <property type="term" value="C:extracellular region"/>
    <property type="evidence" value="ECO:0007669"/>
    <property type="project" value="UniProtKB-KW"/>
</dbReference>
<dbReference type="GO" id="GO:0009530">
    <property type="term" value="C:primary cell wall"/>
    <property type="evidence" value="ECO:0007669"/>
    <property type="project" value="UniProtKB-SubCell"/>
</dbReference>
<dbReference type="GO" id="GO:0071555">
    <property type="term" value="P:cell wall organization"/>
    <property type="evidence" value="ECO:0007669"/>
    <property type="project" value="UniProtKB-KW"/>
</dbReference>
<dbReference type="PRINTS" id="PR01217">
    <property type="entry name" value="PRICHEXTENSN"/>
</dbReference>
<accession>P24152</accession>
<evidence type="ECO:0000250" key="1"/>
<evidence type="ECO:0000255" key="2"/>
<evidence type="ECO:0000256" key="3">
    <source>
        <dbReference type="SAM" id="MobiDB-lite"/>
    </source>
</evidence>
<organism>
    <name type="scientific">Sorghum bicolor</name>
    <name type="common">Sorghum</name>
    <name type="synonym">Sorghum vulgare</name>
    <dbReference type="NCBI Taxonomy" id="4558"/>
    <lineage>
        <taxon>Eukaryota</taxon>
        <taxon>Viridiplantae</taxon>
        <taxon>Streptophyta</taxon>
        <taxon>Embryophyta</taxon>
        <taxon>Tracheophyta</taxon>
        <taxon>Spermatophyta</taxon>
        <taxon>Magnoliopsida</taxon>
        <taxon>Liliopsida</taxon>
        <taxon>Poales</taxon>
        <taxon>Poaceae</taxon>
        <taxon>PACMAD clade</taxon>
        <taxon>Panicoideae</taxon>
        <taxon>Andropogonodae</taxon>
        <taxon>Andropogoneae</taxon>
        <taxon>Sorghinae</taxon>
        <taxon>Sorghum</taxon>
    </lineage>
</organism>
<proteinExistence type="inferred from homology"/>
<gene>
    <name type="primary">HRGP</name>
</gene>
<comment type="function">
    <text>Structural component in primary cell wall.</text>
</comment>
<comment type="subcellular location">
    <subcellularLocation>
        <location evidence="1">Secreted</location>
        <location evidence="1">Primary cell wall</location>
    </subcellularLocation>
</comment>
<comment type="PTM">
    <text>Hydroxylated on proline residues in the S-P-P-P-P repeat.</text>
</comment>
<comment type="PTM">
    <text>O-glycosylated on hydroxyprolines.</text>
</comment>
<feature type="signal peptide" evidence="2">
    <location>
        <begin position="1"/>
        <end position="24"/>
    </location>
</feature>
<feature type="chain" id="PRO_0000008730" description="Extensin">
    <location>
        <begin position="25"/>
        <end position="283"/>
    </location>
</feature>
<feature type="region of interest" description="Disordered" evidence="3">
    <location>
        <begin position="27"/>
        <end position="283"/>
    </location>
</feature>
<feature type="compositionally biased region" description="Pro residues" evidence="3">
    <location>
        <begin position="36"/>
        <end position="45"/>
    </location>
</feature>
<feature type="compositionally biased region" description="Basic and acidic residues" evidence="3">
    <location>
        <begin position="46"/>
        <end position="69"/>
    </location>
</feature>
<feature type="compositionally biased region" description="Pro residues" evidence="3">
    <location>
        <begin position="70"/>
        <end position="264"/>
    </location>
</feature>
<feature type="compositionally biased region" description="Pro residues" evidence="3">
    <location>
        <begin position="272"/>
        <end position="283"/>
    </location>
</feature>
<sequence length="283" mass="29593">MMGGKAALLLALVAVTLAVVEIQADAGYGYGGGYPTPTPKPPAKGPKPEKPPTKGHGHKPEKPPKEHKPTPPTYTPSPKPTPPPATPKPTPPTYTPSPKPKSPVYPPPPKASTPPTYTPSPKPPATKPPTYPTPKPPATKPPTPPVYTPSPKPPVTKPPTPKPTPPVYTPNPKPPVTKPPTHTPSPKPPTSKPTPPVYTPSPKPPKPSPPTYTPTPKPPATKPPTSTPTHPKPTPHTPYPQAHPPTYKPAPKPSPPAPTPPTYTPPVSHTPSSPPPPPPPPYY</sequence>
<reference key="1">
    <citation type="journal article" date="1991" name="Plant Mol. Biol.">
        <title>The sequence of a hydroxyproline-rich glycoprotein gene from Sorghum vulgare.</title>
        <authorList>
            <person name="Raz R."/>
            <person name="Cretin C."/>
            <person name="Puigdomenech P."/>
            <person name="Martinez-Izquierdo J.A."/>
        </authorList>
    </citation>
    <scope>NUCLEOTIDE SEQUENCE [GENOMIC DNA]</scope>
    <source>
        <tissue>Leaf</tissue>
    </source>
</reference>
<name>EXTN_SORBI</name>
<keyword id="KW-0134">Cell wall</keyword>
<keyword id="KW-0961">Cell wall biogenesis/degradation</keyword>
<keyword id="KW-0325">Glycoprotein</keyword>
<keyword id="KW-0379">Hydroxylation</keyword>
<keyword id="KW-0677">Repeat</keyword>
<keyword id="KW-0964">Secreted</keyword>
<keyword id="KW-0732">Signal</keyword>
<protein>
    <recommendedName>
        <fullName>Extensin</fullName>
    </recommendedName>
    <alternativeName>
        <fullName>Proline-rich glycoprotein</fullName>
    </alternativeName>
</protein>